<sequence length="412" mass="46344">MKENFNVSKLKNGLTILTYNMPYVNSVAINLIAKVGSRYENPGEEGIAHFLEHMAFKGTKTRTAKQIAEEFDSIGGHFNAYTGHEKTVYYSRVLSENCNKALAIIADIVQNSAFAEEEIAKEYQVILQEIAHAQDNPDDLVYEKFYNSVFKDQPLGKPILGTSKTIETFNRDHFLKFTGKHYNAENFYLSIAGNVDHEEIVKEAERLFSSLTQGEKSNFSPAKYIGGHSFINKDLEQTTLILGFEGTSYINLERLYQTQLLAIIFGGGMSSRLFQHIREKLGLAYAVGSYNSPYFDSGVFTIYASTAHDKLELLAAELKNEIKRMAEQVKQEEIERARTQIRSNLQMAQEKVAYKSEEIGKNYAVFGKYISPEEIMEIIMNIKAADIIQTANRIFSSSATSAVIGPNNLSGF</sequence>
<keyword id="KW-0378">Hydrolase</keyword>
<keyword id="KW-0479">Metal-binding</keyword>
<keyword id="KW-0482">Metalloprotease</keyword>
<keyword id="KW-0645">Protease</keyword>
<keyword id="KW-0862">Zinc</keyword>
<protein>
    <recommendedName>
        <fullName>Uncharacterized zinc protease RBE_0522</fullName>
        <ecNumber>3.4.24.-</ecNumber>
    </recommendedName>
</protein>
<accession>Q1RJ61</accession>
<comment type="cofactor">
    <cofactor evidence="1">
        <name>Zn(2+)</name>
        <dbReference type="ChEBI" id="CHEBI:29105"/>
    </cofactor>
    <text evidence="1">Divalent metal cations. Binds Zn(2+).</text>
</comment>
<comment type="similarity">
    <text evidence="3">Belongs to the peptidase M16 family.</text>
</comment>
<name>Y522_RICBR</name>
<dbReference type="EC" id="3.4.24.-"/>
<dbReference type="EMBL" id="CP000087">
    <property type="protein sequence ID" value="ABE04603.1"/>
    <property type="molecule type" value="Genomic_DNA"/>
</dbReference>
<dbReference type="RefSeq" id="WP_011477194.1">
    <property type="nucleotide sequence ID" value="NC_007940.1"/>
</dbReference>
<dbReference type="SMR" id="Q1RJ61"/>
<dbReference type="MEROPS" id="M16.016"/>
<dbReference type="KEGG" id="rbe:RBE_0522"/>
<dbReference type="eggNOG" id="COG0612">
    <property type="taxonomic scope" value="Bacteria"/>
</dbReference>
<dbReference type="HOGENOM" id="CLU_009902_3_0_5"/>
<dbReference type="OrthoDB" id="9811314at2"/>
<dbReference type="Proteomes" id="UP000001951">
    <property type="component" value="Chromosome"/>
</dbReference>
<dbReference type="GO" id="GO:0046872">
    <property type="term" value="F:metal ion binding"/>
    <property type="evidence" value="ECO:0007669"/>
    <property type="project" value="UniProtKB-KW"/>
</dbReference>
<dbReference type="GO" id="GO:0004222">
    <property type="term" value="F:metalloendopeptidase activity"/>
    <property type="evidence" value="ECO:0007669"/>
    <property type="project" value="InterPro"/>
</dbReference>
<dbReference type="GO" id="GO:0006508">
    <property type="term" value="P:proteolysis"/>
    <property type="evidence" value="ECO:0007669"/>
    <property type="project" value="UniProtKB-KW"/>
</dbReference>
<dbReference type="FunFam" id="3.30.830.10:FF:000008">
    <property type="entry name" value="Mitochondrial-processing peptidase subunit beta"/>
    <property type="match status" value="1"/>
</dbReference>
<dbReference type="Gene3D" id="3.30.830.10">
    <property type="entry name" value="Metalloenzyme, LuxS/M16 peptidase-like"/>
    <property type="match status" value="2"/>
</dbReference>
<dbReference type="InterPro" id="IPR011249">
    <property type="entry name" value="Metalloenz_LuxS/M16"/>
</dbReference>
<dbReference type="InterPro" id="IPR050361">
    <property type="entry name" value="MPP/UQCRC_Complex"/>
</dbReference>
<dbReference type="InterPro" id="IPR011765">
    <property type="entry name" value="Pept_M16_N"/>
</dbReference>
<dbReference type="InterPro" id="IPR001431">
    <property type="entry name" value="Pept_M16_Zn_BS"/>
</dbReference>
<dbReference type="InterPro" id="IPR007863">
    <property type="entry name" value="Peptidase_M16_C"/>
</dbReference>
<dbReference type="PANTHER" id="PTHR11851">
    <property type="entry name" value="METALLOPROTEASE"/>
    <property type="match status" value="1"/>
</dbReference>
<dbReference type="PANTHER" id="PTHR11851:SF49">
    <property type="entry name" value="MITOCHONDRIAL-PROCESSING PEPTIDASE SUBUNIT ALPHA"/>
    <property type="match status" value="1"/>
</dbReference>
<dbReference type="Pfam" id="PF00675">
    <property type="entry name" value="Peptidase_M16"/>
    <property type="match status" value="1"/>
</dbReference>
<dbReference type="Pfam" id="PF05193">
    <property type="entry name" value="Peptidase_M16_C"/>
    <property type="match status" value="1"/>
</dbReference>
<dbReference type="SUPFAM" id="SSF63411">
    <property type="entry name" value="LuxS/MPP-like metallohydrolase"/>
    <property type="match status" value="2"/>
</dbReference>
<dbReference type="PROSITE" id="PS00143">
    <property type="entry name" value="INSULINASE"/>
    <property type="match status" value="1"/>
</dbReference>
<reference key="1">
    <citation type="journal article" date="2006" name="PLoS Genet.">
        <title>Genome sequence of Rickettsia bellii illuminates the role of amoebae in gene exchanges between intracellular pathogens.</title>
        <authorList>
            <person name="Ogata H."/>
            <person name="La Scola B."/>
            <person name="Audic S."/>
            <person name="Renesto P."/>
            <person name="Blanc G."/>
            <person name="Robert C."/>
            <person name="Fournier P.-E."/>
            <person name="Claverie J.-M."/>
            <person name="Raoult D."/>
        </authorList>
    </citation>
    <scope>NUCLEOTIDE SEQUENCE [LARGE SCALE GENOMIC DNA]</scope>
    <source>
        <strain>RML369-C</strain>
    </source>
</reference>
<feature type="chain" id="PRO_0000295169" description="Uncharacterized zinc protease RBE_0522">
    <location>
        <begin position="1"/>
        <end position="412"/>
    </location>
</feature>
<feature type="active site" description="Proton acceptor" evidence="2">
    <location>
        <position position="52"/>
    </location>
</feature>
<feature type="binding site" evidence="2">
    <location>
        <position position="49"/>
    </location>
    <ligand>
        <name>Zn(2+)</name>
        <dbReference type="ChEBI" id="CHEBI:29105"/>
    </ligand>
</feature>
<feature type="binding site" evidence="2">
    <location>
        <position position="53"/>
    </location>
    <ligand>
        <name>Zn(2+)</name>
        <dbReference type="ChEBI" id="CHEBI:29105"/>
    </ligand>
</feature>
<feature type="binding site" evidence="2">
    <location>
        <position position="129"/>
    </location>
    <ligand>
        <name>Zn(2+)</name>
        <dbReference type="ChEBI" id="CHEBI:29105"/>
    </ligand>
</feature>
<organism>
    <name type="scientific">Rickettsia bellii (strain RML369-C)</name>
    <dbReference type="NCBI Taxonomy" id="336407"/>
    <lineage>
        <taxon>Bacteria</taxon>
        <taxon>Pseudomonadati</taxon>
        <taxon>Pseudomonadota</taxon>
        <taxon>Alphaproteobacteria</taxon>
        <taxon>Rickettsiales</taxon>
        <taxon>Rickettsiaceae</taxon>
        <taxon>Rickettsieae</taxon>
        <taxon>Rickettsia</taxon>
        <taxon>belli group</taxon>
    </lineage>
</organism>
<evidence type="ECO:0000250" key="1"/>
<evidence type="ECO:0000255" key="2">
    <source>
        <dbReference type="PROSITE-ProRule" id="PRU10096"/>
    </source>
</evidence>
<evidence type="ECO:0000305" key="3"/>
<proteinExistence type="inferred from homology"/>
<gene>
    <name type="ordered locus">RBE_0522</name>
</gene>